<dbReference type="EMBL" id="CP000425">
    <property type="protein sequence ID" value="ABJ72914.1"/>
    <property type="molecule type" value="Genomic_DNA"/>
</dbReference>
<dbReference type="RefSeq" id="WP_011676204.1">
    <property type="nucleotide sequence ID" value="NC_008527.1"/>
</dbReference>
<dbReference type="SMR" id="Q02YQ8"/>
<dbReference type="KEGG" id="llc:LACR_1398"/>
<dbReference type="HOGENOM" id="CLU_038686_3_3_9"/>
<dbReference type="Proteomes" id="UP000000240">
    <property type="component" value="Chromosome"/>
</dbReference>
<dbReference type="GO" id="GO:0005737">
    <property type="term" value="C:cytoplasm"/>
    <property type="evidence" value="ECO:0007669"/>
    <property type="project" value="UniProtKB-SubCell"/>
</dbReference>
<dbReference type="GO" id="GO:0051301">
    <property type="term" value="P:cell division"/>
    <property type="evidence" value="ECO:0007669"/>
    <property type="project" value="UniProtKB-KW"/>
</dbReference>
<dbReference type="GO" id="GO:0007059">
    <property type="term" value="P:chromosome segregation"/>
    <property type="evidence" value="ECO:0007669"/>
    <property type="project" value="UniProtKB-UniRule"/>
</dbReference>
<dbReference type="GO" id="GO:0006260">
    <property type="term" value="P:DNA replication"/>
    <property type="evidence" value="ECO:0007669"/>
    <property type="project" value="UniProtKB-UniRule"/>
</dbReference>
<dbReference type="Gene3D" id="6.10.250.2410">
    <property type="match status" value="1"/>
</dbReference>
<dbReference type="Gene3D" id="1.10.10.580">
    <property type="entry name" value="Structural maintenance of chromosome 1. Chain E"/>
    <property type="match status" value="1"/>
</dbReference>
<dbReference type="HAMAP" id="MF_01805">
    <property type="entry name" value="ScpA"/>
    <property type="match status" value="1"/>
</dbReference>
<dbReference type="InterPro" id="IPR003768">
    <property type="entry name" value="ScpA"/>
</dbReference>
<dbReference type="InterPro" id="IPR023093">
    <property type="entry name" value="ScpA-like_C"/>
</dbReference>
<dbReference type="NCBIfam" id="NF000993">
    <property type="entry name" value="PRK00104.1-2"/>
    <property type="match status" value="1"/>
</dbReference>
<dbReference type="PANTHER" id="PTHR33969">
    <property type="entry name" value="SEGREGATION AND CONDENSATION PROTEIN A"/>
    <property type="match status" value="1"/>
</dbReference>
<dbReference type="PANTHER" id="PTHR33969:SF2">
    <property type="entry name" value="SEGREGATION AND CONDENSATION PROTEIN A"/>
    <property type="match status" value="1"/>
</dbReference>
<dbReference type="Pfam" id="PF02616">
    <property type="entry name" value="SMC_ScpA"/>
    <property type="match status" value="1"/>
</dbReference>
<accession>Q02YQ8</accession>
<reference key="1">
    <citation type="journal article" date="2006" name="Proc. Natl. Acad. Sci. U.S.A.">
        <title>Comparative genomics of the lactic acid bacteria.</title>
        <authorList>
            <person name="Makarova K.S."/>
            <person name="Slesarev A."/>
            <person name="Wolf Y.I."/>
            <person name="Sorokin A."/>
            <person name="Mirkin B."/>
            <person name="Koonin E.V."/>
            <person name="Pavlov A."/>
            <person name="Pavlova N."/>
            <person name="Karamychev V."/>
            <person name="Polouchine N."/>
            <person name="Shakhova V."/>
            <person name="Grigoriev I."/>
            <person name="Lou Y."/>
            <person name="Rohksar D."/>
            <person name="Lucas S."/>
            <person name="Huang K."/>
            <person name="Goodstein D.M."/>
            <person name="Hawkins T."/>
            <person name="Plengvidhya V."/>
            <person name="Welker D."/>
            <person name="Hughes J."/>
            <person name="Goh Y."/>
            <person name="Benson A."/>
            <person name="Baldwin K."/>
            <person name="Lee J.-H."/>
            <person name="Diaz-Muniz I."/>
            <person name="Dosti B."/>
            <person name="Smeianov V."/>
            <person name="Wechter W."/>
            <person name="Barabote R."/>
            <person name="Lorca G."/>
            <person name="Altermann E."/>
            <person name="Barrangou R."/>
            <person name="Ganesan B."/>
            <person name="Xie Y."/>
            <person name="Rawsthorne H."/>
            <person name="Tamir D."/>
            <person name="Parker C."/>
            <person name="Breidt F."/>
            <person name="Broadbent J.R."/>
            <person name="Hutkins R."/>
            <person name="O'Sullivan D."/>
            <person name="Steele J."/>
            <person name="Unlu G."/>
            <person name="Saier M.H. Jr."/>
            <person name="Klaenhammer T."/>
            <person name="Richardson P."/>
            <person name="Kozyavkin S."/>
            <person name="Weimer B.C."/>
            <person name="Mills D.A."/>
        </authorList>
    </citation>
    <scope>NUCLEOTIDE SEQUENCE [LARGE SCALE GENOMIC DNA]</scope>
    <source>
        <strain>SK11</strain>
    </source>
</reference>
<sequence length="242" mass="28575">MIKEINIKIKNFEGPLDLLLHLVSQYEMDIFEVPLVPVIEQYLIYIQTMKELELELAGEYMLMASQLMLIKSRRLLPTVTETFIEDTEQLEYDLLAQIDEYRKYKMLSEDLDELHQERSHYYSKSKTEIITDETVLLQDKTALDLFLAFSKILELQRQQIEDDNTTIAAEKFTIADKIFELNQRFTEQKICKFTDLFSDKTKKDELVTTFMALLELIKNQQVSFSQGELFGEIILERKEISE</sequence>
<evidence type="ECO:0000255" key="1">
    <source>
        <dbReference type="HAMAP-Rule" id="MF_01805"/>
    </source>
</evidence>
<keyword id="KW-0131">Cell cycle</keyword>
<keyword id="KW-0132">Cell division</keyword>
<keyword id="KW-0159">Chromosome partition</keyword>
<keyword id="KW-0963">Cytoplasm</keyword>
<feature type="chain" id="PRO_1000069973" description="Segregation and condensation protein A">
    <location>
        <begin position="1"/>
        <end position="242"/>
    </location>
</feature>
<comment type="function">
    <text evidence="1">Participates in chromosomal partition during cell division. May act via the formation of a condensin-like complex containing Smc and ScpB that pull DNA away from mid-cell into both cell halves.</text>
</comment>
<comment type="subunit">
    <text evidence="1">Component of a cohesin-like complex composed of ScpA, ScpB and the Smc homodimer, in which ScpA and ScpB bind to the head domain of Smc. The presence of the three proteins is required for the association of the complex with DNA.</text>
</comment>
<comment type="subcellular location">
    <subcellularLocation>
        <location evidence="1">Cytoplasm</location>
    </subcellularLocation>
    <text evidence="1">Associated with two foci at the outer edges of the nucleoid region in young cells, and at four foci within both cell halves in older cells.</text>
</comment>
<comment type="similarity">
    <text evidence="1">Belongs to the ScpA family.</text>
</comment>
<protein>
    <recommendedName>
        <fullName evidence="1">Segregation and condensation protein A</fullName>
    </recommendedName>
</protein>
<name>SCPA_LACLS</name>
<organism>
    <name type="scientific">Lactococcus lactis subsp. cremoris (strain SK11)</name>
    <dbReference type="NCBI Taxonomy" id="272622"/>
    <lineage>
        <taxon>Bacteria</taxon>
        <taxon>Bacillati</taxon>
        <taxon>Bacillota</taxon>
        <taxon>Bacilli</taxon>
        <taxon>Lactobacillales</taxon>
        <taxon>Streptococcaceae</taxon>
        <taxon>Lactococcus</taxon>
        <taxon>Lactococcus cremoris subsp. cremoris</taxon>
    </lineage>
</organism>
<gene>
    <name evidence="1" type="primary">scpA</name>
    <name type="ordered locus">LACR_1398</name>
</gene>
<proteinExistence type="inferred from homology"/>